<reference key="1">
    <citation type="journal article" date="2002" name="J. Bacteriol.">
        <title>Whole-genome comparison of Mycobacterium tuberculosis clinical and laboratory strains.</title>
        <authorList>
            <person name="Fleischmann R.D."/>
            <person name="Alland D."/>
            <person name="Eisen J.A."/>
            <person name="Carpenter L."/>
            <person name="White O."/>
            <person name="Peterson J.D."/>
            <person name="DeBoy R.T."/>
            <person name="Dodson R.J."/>
            <person name="Gwinn M.L."/>
            <person name="Haft D.H."/>
            <person name="Hickey E.K."/>
            <person name="Kolonay J.F."/>
            <person name="Nelson W.C."/>
            <person name="Umayam L.A."/>
            <person name="Ermolaeva M.D."/>
            <person name="Salzberg S.L."/>
            <person name="Delcher A."/>
            <person name="Utterback T.R."/>
            <person name="Weidman J.F."/>
            <person name="Khouri H.M."/>
            <person name="Gill J."/>
            <person name="Mikula A."/>
            <person name="Bishai W."/>
            <person name="Jacobs W.R. Jr."/>
            <person name="Venter J.C."/>
            <person name="Fraser C.M."/>
        </authorList>
    </citation>
    <scope>NUCLEOTIDE SEQUENCE [LARGE SCALE GENOMIC DNA]</scope>
    <source>
        <strain>CDC 1551 / Oshkosh</strain>
    </source>
</reference>
<accession>P9WK02</accession>
<accession>L0T2F1</accession>
<accession>P65346</accession>
<accession>Q10886</accession>
<proteinExistence type="inferred from homology"/>
<protein>
    <recommendedName>
        <fullName>Uncharacterized methyltransferase MT0098</fullName>
        <ecNumber>2.1.1.-</ecNumber>
    </recommendedName>
</protein>
<sequence>MDQPWNANIHYDALLDAMVPLGTQCVLDVGCGDGLLAARLARRIPYVTAVDIDAPVLRRAQTRFANAPIRWLHADIMTAELPNAGFDAVVSNAALHHIEDTRTALSRLGGLVTPGGTLAVVTFVTPSLRNGLWHLTSWVACGMANRVKGKWEHSAPIKWPPPQTLHELRSHVRALLPGACIRRLLYGRVLVTWRAPV</sequence>
<feature type="chain" id="PRO_0000427740" description="Uncharacterized methyltransferase MT0098">
    <location>
        <begin position="1"/>
        <end position="197"/>
    </location>
</feature>
<evidence type="ECO:0000305" key="1"/>
<dbReference type="EC" id="2.1.1.-"/>
<dbReference type="EMBL" id="AE000516">
    <property type="protein sequence ID" value="AAK44320.1"/>
    <property type="molecule type" value="Genomic_DNA"/>
</dbReference>
<dbReference type="PIR" id="A70750">
    <property type="entry name" value="A70750"/>
</dbReference>
<dbReference type="SMR" id="P9WK02"/>
<dbReference type="KEGG" id="mtc:MT0098"/>
<dbReference type="PATRIC" id="fig|83331.31.peg.103"/>
<dbReference type="HOGENOM" id="CLU_090578_0_0_11"/>
<dbReference type="Proteomes" id="UP000001020">
    <property type="component" value="Chromosome"/>
</dbReference>
<dbReference type="GO" id="GO:0008757">
    <property type="term" value="F:S-adenosylmethionine-dependent methyltransferase activity"/>
    <property type="evidence" value="ECO:0007669"/>
    <property type="project" value="InterPro"/>
</dbReference>
<dbReference type="GO" id="GO:0032259">
    <property type="term" value="P:methylation"/>
    <property type="evidence" value="ECO:0007669"/>
    <property type="project" value="UniProtKB-KW"/>
</dbReference>
<dbReference type="CDD" id="cd02440">
    <property type="entry name" value="AdoMet_MTases"/>
    <property type="match status" value="1"/>
</dbReference>
<dbReference type="Gene3D" id="3.40.50.150">
    <property type="entry name" value="Vaccinia Virus protein VP39"/>
    <property type="match status" value="1"/>
</dbReference>
<dbReference type="InterPro" id="IPR013216">
    <property type="entry name" value="Methyltransf_11"/>
</dbReference>
<dbReference type="InterPro" id="IPR029063">
    <property type="entry name" value="SAM-dependent_MTases_sf"/>
</dbReference>
<dbReference type="PANTHER" id="PTHR43861:SF1">
    <property type="entry name" value="TRANS-ACONITATE 2-METHYLTRANSFERASE"/>
    <property type="match status" value="1"/>
</dbReference>
<dbReference type="PANTHER" id="PTHR43861">
    <property type="entry name" value="TRANS-ACONITATE 2-METHYLTRANSFERASE-RELATED"/>
    <property type="match status" value="1"/>
</dbReference>
<dbReference type="Pfam" id="PF08241">
    <property type="entry name" value="Methyltransf_11"/>
    <property type="match status" value="1"/>
</dbReference>
<dbReference type="SUPFAM" id="SSF53335">
    <property type="entry name" value="S-adenosyl-L-methionine-dependent methyltransferases"/>
    <property type="match status" value="1"/>
</dbReference>
<organism>
    <name type="scientific">Mycobacterium tuberculosis (strain CDC 1551 / Oshkosh)</name>
    <dbReference type="NCBI Taxonomy" id="83331"/>
    <lineage>
        <taxon>Bacteria</taxon>
        <taxon>Bacillati</taxon>
        <taxon>Actinomycetota</taxon>
        <taxon>Actinomycetes</taxon>
        <taxon>Mycobacteriales</taxon>
        <taxon>Mycobacteriaceae</taxon>
        <taxon>Mycobacterium</taxon>
        <taxon>Mycobacterium tuberculosis complex</taxon>
    </lineage>
</organism>
<name>Y089_MYCTO</name>
<gene>
    <name type="ordered locus">MT0098</name>
</gene>
<comment type="similarity">
    <text evidence="1">Belongs to the methyltransferase superfamily.</text>
</comment>
<keyword id="KW-0489">Methyltransferase</keyword>
<keyword id="KW-1185">Reference proteome</keyword>
<keyword id="KW-0808">Transferase</keyword>